<keyword id="KW-1003">Cell membrane</keyword>
<keyword id="KW-0285">Flavoprotein</keyword>
<keyword id="KW-0288">FMN</keyword>
<keyword id="KW-0472">Membrane</keyword>
<keyword id="KW-0560">Oxidoreductase</keyword>
<keyword id="KW-0665">Pyrimidine biosynthesis</keyword>
<keyword id="KW-1185">Reference proteome</keyword>
<reference key="1">
    <citation type="submission" date="2007-10" db="EMBL/GenBank/DDBJ databases">
        <title>Complete sequence of chromosome 1 of Burkholderia multivorans ATCC 17616.</title>
        <authorList>
            <person name="Copeland A."/>
            <person name="Lucas S."/>
            <person name="Lapidus A."/>
            <person name="Barry K."/>
            <person name="Glavina del Rio T."/>
            <person name="Dalin E."/>
            <person name="Tice H."/>
            <person name="Pitluck S."/>
            <person name="Chain P."/>
            <person name="Malfatti S."/>
            <person name="Shin M."/>
            <person name="Vergez L."/>
            <person name="Schmutz J."/>
            <person name="Larimer F."/>
            <person name="Land M."/>
            <person name="Hauser L."/>
            <person name="Kyrpides N."/>
            <person name="Kim E."/>
            <person name="Tiedje J."/>
            <person name="Richardson P."/>
        </authorList>
    </citation>
    <scope>NUCLEOTIDE SEQUENCE [LARGE SCALE GENOMIC DNA]</scope>
    <source>
        <strain>ATCC 17616 / 249</strain>
    </source>
</reference>
<reference key="2">
    <citation type="submission" date="2007-04" db="EMBL/GenBank/DDBJ databases">
        <title>Complete genome sequence of Burkholderia multivorans ATCC 17616.</title>
        <authorList>
            <person name="Ohtsubo Y."/>
            <person name="Yamashita A."/>
            <person name="Kurokawa K."/>
            <person name="Takami H."/>
            <person name="Yuhara S."/>
            <person name="Nishiyama E."/>
            <person name="Endo R."/>
            <person name="Miyazaki R."/>
            <person name="Ono A."/>
            <person name="Yano K."/>
            <person name="Ito M."/>
            <person name="Sota M."/>
            <person name="Yuji N."/>
            <person name="Hattori M."/>
            <person name="Tsuda M."/>
        </authorList>
    </citation>
    <scope>NUCLEOTIDE SEQUENCE [LARGE SCALE GENOMIC DNA]</scope>
    <source>
        <strain>ATCC 17616 / 249</strain>
    </source>
</reference>
<accession>A9AJX4</accession>
<sequence length="345" mass="36590">MFSSLYPLARASLFKMDAEDAHHLTLRALGAAGRTGLACALSARVPDAPRTVMGLTFRNPVGLAAGLDKDGAAIDGLAALGFGFIEVGTVTPRAQPGNPRPRMFRLPQAEALINRMGFNNHGVDQFVKNVQAARYRGILGLNIGKNADTPIERAADDYLYCLERVYPFASYVTINISSPNTKNLRQLQGAGELDALLAALKDKQQRLADLHGKLVPLALKIAPDLDDEQVKAIADTLLRHKIEAVIATNTTLSRAAVQGLPHADEAGGLSGRPVFDASNEVIRKLHAEVGSAVPIIGVGGIFSGDDARAKLAAGASLVQLYTGFIYRGPALVAECVKAIARERAA</sequence>
<comment type="function">
    <text evidence="1">Catalyzes the conversion of dihydroorotate to orotate with quinone as electron acceptor.</text>
</comment>
<comment type="catalytic activity">
    <reaction evidence="1">
        <text>(S)-dihydroorotate + a quinone = orotate + a quinol</text>
        <dbReference type="Rhea" id="RHEA:30187"/>
        <dbReference type="ChEBI" id="CHEBI:24646"/>
        <dbReference type="ChEBI" id="CHEBI:30839"/>
        <dbReference type="ChEBI" id="CHEBI:30864"/>
        <dbReference type="ChEBI" id="CHEBI:132124"/>
        <dbReference type="EC" id="1.3.5.2"/>
    </reaction>
</comment>
<comment type="cofactor">
    <cofactor evidence="1">
        <name>FMN</name>
        <dbReference type="ChEBI" id="CHEBI:58210"/>
    </cofactor>
    <text evidence="1">Binds 1 FMN per subunit.</text>
</comment>
<comment type="pathway">
    <text evidence="1">Pyrimidine metabolism; UMP biosynthesis via de novo pathway; orotate from (S)-dihydroorotate (quinone route): step 1/1.</text>
</comment>
<comment type="subunit">
    <text evidence="1">Monomer.</text>
</comment>
<comment type="subcellular location">
    <subcellularLocation>
        <location evidence="1">Cell membrane</location>
        <topology evidence="1">Peripheral membrane protein</topology>
    </subcellularLocation>
</comment>
<comment type="similarity">
    <text evidence="1">Belongs to the dihydroorotate dehydrogenase family. Type 2 subfamily.</text>
</comment>
<proteinExistence type="inferred from homology"/>
<feature type="chain" id="PRO_1000100253" description="Dihydroorotate dehydrogenase (quinone)">
    <location>
        <begin position="1"/>
        <end position="345"/>
    </location>
</feature>
<feature type="active site" description="Nucleophile" evidence="1">
    <location>
        <position position="178"/>
    </location>
</feature>
<feature type="binding site" evidence="1">
    <location>
        <begin position="65"/>
        <end position="69"/>
    </location>
    <ligand>
        <name>FMN</name>
        <dbReference type="ChEBI" id="CHEBI:58210"/>
    </ligand>
</feature>
<feature type="binding site" evidence="1">
    <location>
        <position position="69"/>
    </location>
    <ligand>
        <name>substrate</name>
    </ligand>
</feature>
<feature type="binding site" evidence="1">
    <location>
        <position position="89"/>
    </location>
    <ligand>
        <name>FMN</name>
        <dbReference type="ChEBI" id="CHEBI:58210"/>
    </ligand>
</feature>
<feature type="binding site" evidence="1">
    <location>
        <begin position="114"/>
        <end position="118"/>
    </location>
    <ligand>
        <name>substrate</name>
    </ligand>
</feature>
<feature type="binding site" evidence="1">
    <location>
        <position position="142"/>
    </location>
    <ligand>
        <name>FMN</name>
        <dbReference type="ChEBI" id="CHEBI:58210"/>
    </ligand>
</feature>
<feature type="binding site" evidence="1">
    <location>
        <position position="175"/>
    </location>
    <ligand>
        <name>FMN</name>
        <dbReference type="ChEBI" id="CHEBI:58210"/>
    </ligand>
</feature>
<feature type="binding site" evidence="1">
    <location>
        <position position="175"/>
    </location>
    <ligand>
        <name>substrate</name>
    </ligand>
</feature>
<feature type="binding site" evidence="1">
    <location>
        <position position="180"/>
    </location>
    <ligand>
        <name>substrate</name>
    </ligand>
</feature>
<feature type="binding site" evidence="1">
    <location>
        <position position="220"/>
    </location>
    <ligand>
        <name>FMN</name>
        <dbReference type="ChEBI" id="CHEBI:58210"/>
    </ligand>
</feature>
<feature type="binding site" evidence="1">
    <location>
        <position position="248"/>
    </location>
    <ligand>
        <name>FMN</name>
        <dbReference type="ChEBI" id="CHEBI:58210"/>
    </ligand>
</feature>
<feature type="binding site" evidence="1">
    <location>
        <begin position="249"/>
        <end position="250"/>
    </location>
    <ligand>
        <name>substrate</name>
    </ligand>
</feature>
<feature type="binding site" evidence="1">
    <location>
        <position position="271"/>
    </location>
    <ligand>
        <name>FMN</name>
        <dbReference type="ChEBI" id="CHEBI:58210"/>
    </ligand>
</feature>
<feature type="binding site" evidence="1">
    <location>
        <position position="300"/>
    </location>
    <ligand>
        <name>FMN</name>
        <dbReference type="ChEBI" id="CHEBI:58210"/>
    </ligand>
</feature>
<feature type="binding site" evidence="1">
    <location>
        <begin position="321"/>
        <end position="322"/>
    </location>
    <ligand>
        <name>FMN</name>
        <dbReference type="ChEBI" id="CHEBI:58210"/>
    </ligand>
</feature>
<gene>
    <name evidence="1" type="primary">pyrD</name>
    <name type="ordered locus">Bmul_1678</name>
    <name type="ordered locus">BMULJ_01565</name>
</gene>
<organism>
    <name type="scientific">Burkholderia multivorans (strain ATCC 17616 / 249)</name>
    <dbReference type="NCBI Taxonomy" id="395019"/>
    <lineage>
        <taxon>Bacteria</taxon>
        <taxon>Pseudomonadati</taxon>
        <taxon>Pseudomonadota</taxon>
        <taxon>Betaproteobacteria</taxon>
        <taxon>Burkholderiales</taxon>
        <taxon>Burkholderiaceae</taxon>
        <taxon>Burkholderia</taxon>
        <taxon>Burkholderia cepacia complex</taxon>
    </lineage>
</organism>
<evidence type="ECO:0000255" key="1">
    <source>
        <dbReference type="HAMAP-Rule" id="MF_00225"/>
    </source>
</evidence>
<protein>
    <recommendedName>
        <fullName evidence="1">Dihydroorotate dehydrogenase (quinone)</fullName>
        <ecNumber evidence="1">1.3.5.2</ecNumber>
    </recommendedName>
    <alternativeName>
        <fullName evidence="1">DHOdehase</fullName>
        <shortName evidence="1">DHOD</shortName>
        <shortName evidence="1">DHODase</shortName>
    </alternativeName>
    <alternativeName>
        <fullName evidence="1">Dihydroorotate oxidase</fullName>
    </alternativeName>
</protein>
<name>PYRD_BURM1</name>
<dbReference type="EC" id="1.3.5.2" evidence="1"/>
<dbReference type="EMBL" id="CP000868">
    <property type="protein sequence ID" value="ABX15366.1"/>
    <property type="molecule type" value="Genomic_DNA"/>
</dbReference>
<dbReference type="EMBL" id="AP009385">
    <property type="protein sequence ID" value="BAG43491.1"/>
    <property type="molecule type" value="Genomic_DNA"/>
</dbReference>
<dbReference type="RefSeq" id="WP_006400200.1">
    <property type="nucleotide sequence ID" value="NC_010804.1"/>
</dbReference>
<dbReference type="SMR" id="A9AJX4"/>
<dbReference type="STRING" id="395019.BMULJ_01565"/>
<dbReference type="KEGG" id="bmj:BMULJ_01565"/>
<dbReference type="KEGG" id="bmu:Bmul_1678"/>
<dbReference type="eggNOG" id="COG0167">
    <property type="taxonomic scope" value="Bacteria"/>
</dbReference>
<dbReference type="HOGENOM" id="CLU_013640_2_0_4"/>
<dbReference type="UniPathway" id="UPA00070">
    <property type="reaction ID" value="UER00946"/>
</dbReference>
<dbReference type="Proteomes" id="UP000008815">
    <property type="component" value="Chromosome 1"/>
</dbReference>
<dbReference type="GO" id="GO:0005737">
    <property type="term" value="C:cytoplasm"/>
    <property type="evidence" value="ECO:0007669"/>
    <property type="project" value="InterPro"/>
</dbReference>
<dbReference type="GO" id="GO:0005886">
    <property type="term" value="C:plasma membrane"/>
    <property type="evidence" value="ECO:0007669"/>
    <property type="project" value="UniProtKB-SubCell"/>
</dbReference>
<dbReference type="GO" id="GO:0106430">
    <property type="term" value="F:dihydroorotate dehydrogenase (quinone) activity"/>
    <property type="evidence" value="ECO:0007669"/>
    <property type="project" value="UniProtKB-EC"/>
</dbReference>
<dbReference type="GO" id="GO:0006207">
    <property type="term" value="P:'de novo' pyrimidine nucleobase biosynthetic process"/>
    <property type="evidence" value="ECO:0007669"/>
    <property type="project" value="InterPro"/>
</dbReference>
<dbReference type="GO" id="GO:0044205">
    <property type="term" value="P:'de novo' UMP biosynthetic process"/>
    <property type="evidence" value="ECO:0007669"/>
    <property type="project" value="UniProtKB-UniRule"/>
</dbReference>
<dbReference type="CDD" id="cd04738">
    <property type="entry name" value="DHOD_2_like"/>
    <property type="match status" value="1"/>
</dbReference>
<dbReference type="FunFam" id="3.20.20.70:FF:000028">
    <property type="entry name" value="Dihydroorotate dehydrogenase (quinone)"/>
    <property type="match status" value="1"/>
</dbReference>
<dbReference type="Gene3D" id="3.20.20.70">
    <property type="entry name" value="Aldolase class I"/>
    <property type="match status" value="1"/>
</dbReference>
<dbReference type="HAMAP" id="MF_00225">
    <property type="entry name" value="DHO_dh_type2"/>
    <property type="match status" value="1"/>
</dbReference>
<dbReference type="InterPro" id="IPR013785">
    <property type="entry name" value="Aldolase_TIM"/>
</dbReference>
<dbReference type="InterPro" id="IPR050074">
    <property type="entry name" value="DHO_dehydrogenase"/>
</dbReference>
<dbReference type="InterPro" id="IPR012135">
    <property type="entry name" value="Dihydroorotate_DH_1_2"/>
</dbReference>
<dbReference type="InterPro" id="IPR005719">
    <property type="entry name" value="Dihydroorotate_DH_2"/>
</dbReference>
<dbReference type="InterPro" id="IPR005720">
    <property type="entry name" value="Dihydroorotate_DH_cat"/>
</dbReference>
<dbReference type="InterPro" id="IPR001295">
    <property type="entry name" value="Dihydroorotate_DH_CS"/>
</dbReference>
<dbReference type="NCBIfam" id="NF003644">
    <property type="entry name" value="PRK05286.1-1"/>
    <property type="match status" value="1"/>
</dbReference>
<dbReference type="NCBIfam" id="NF003645">
    <property type="entry name" value="PRK05286.1-2"/>
    <property type="match status" value="1"/>
</dbReference>
<dbReference type="NCBIfam" id="NF003646">
    <property type="entry name" value="PRK05286.1-4"/>
    <property type="match status" value="1"/>
</dbReference>
<dbReference type="NCBIfam" id="NF003652">
    <property type="entry name" value="PRK05286.2-5"/>
    <property type="match status" value="1"/>
</dbReference>
<dbReference type="NCBIfam" id="TIGR01036">
    <property type="entry name" value="pyrD_sub2"/>
    <property type="match status" value="1"/>
</dbReference>
<dbReference type="PANTHER" id="PTHR48109:SF4">
    <property type="entry name" value="DIHYDROOROTATE DEHYDROGENASE (QUINONE), MITOCHONDRIAL"/>
    <property type="match status" value="1"/>
</dbReference>
<dbReference type="PANTHER" id="PTHR48109">
    <property type="entry name" value="DIHYDROOROTATE DEHYDROGENASE (QUINONE), MITOCHONDRIAL-RELATED"/>
    <property type="match status" value="1"/>
</dbReference>
<dbReference type="Pfam" id="PF01180">
    <property type="entry name" value="DHO_dh"/>
    <property type="match status" value="1"/>
</dbReference>
<dbReference type="PIRSF" id="PIRSF000164">
    <property type="entry name" value="DHO_oxidase"/>
    <property type="match status" value="1"/>
</dbReference>
<dbReference type="SUPFAM" id="SSF51395">
    <property type="entry name" value="FMN-linked oxidoreductases"/>
    <property type="match status" value="1"/>
</dbReference>
<dbReference type="PROSITE" id="PS00911">
    <property type="entry name" value="DHODEHASE_1"/>
    <property type="match status" value="1"/>
</dbReference>
<dbReference type="PROSITE" id="PS00912">
    <property type="entry name" value="DHODEHASE_2"/>
    <property type="match status" value="1"/>
</dbReference>